<evidence type="ECO:0000255" key="1">
    <source>
        <dbReference type="HAMAP-Rule" id="MF_01656"/>
    </source>
</evidence>
<sequence length="347" mass="36772">MTGIWDVRITDTSLRDGSHHKRHQFIKEEVGAIVAALDAAGVPVIEVTHGDGLGGSSFNYGFSKTSEQELIKLAAQTAKEAKIAFLMLPGVGTKEDIKEAQDNGGSICRIATHCTEADVSIQHLGLARELGLETVGFLMMAHTIAPEKLAAQARIMADAGCQCVYVVDSAGALVLDGVADRVAALVAELGEDAQVGFHGHENLGLGVANSVEAVRAGAKQIDGSVRRFGAGAGNAPVEALIGVFDKIGVKTGIDFFDIADAAEDVVRPAMPAECLLDRNALIMGYSGVYSSFLKHAVRQSERYGVPAHQLLHRAGQRKLIGGQEDQLIDIALEIKREQESGQVASRR</sequence>
<gene>
    <name type="ordered locus">MUL_4095</name>
</gene>
<reference key="1">
    <citation type="journal article" date="2007" name="Genome Res.">
        <title>Reductive evolution and niche adaptation inferred from the genome of Mycobacterium ulcerans, the causative agent of Buruli ulcer.</title>
        <authorList>
            <person name="Stinear T.P."/>
            <person name="Seemann T."/>
            <person name="Pidot S."/>
            <person name="Frigui W."/>
            <person name="Reysset G."/>
            <person name="Garnier T."/>
            <person name="Meurice G."/>
            <person name="Simon D."/>
            <person name="Bouchier C."/>
            <person name="Ma L."/>
            <person name="Tichit M."/>
            <person name="Porter J.L."/>
            <person name="Ryan J."/>
            <person name="Johnson P.D.R."/>
            <person name="Davies J.K."/>
            <person name="Jenkin G.A."/>
            <person name="Small P.L.C."/>
            <person name="Jones L.M."/>
            <person name="Tekaia F."/>
            <person name="Laval F."/>
            <person name="Daffe M."/>
            <person name="Parkhill J."/>
            <person name="Cole S.T."/>
        </authorList>
    </citation>
    <scope>NUCLEOTIDE SEQUENCE [LARGE SCALE GENOMIC DNA]</scope>
    <source>
        <strain>Agy99</strain>
    </source>
</reference>
<proteinExistence type="inferred from homology"/>
<feature type="chain" id="PRO_0000387865" description="4-hydroxy-2-oxovalerate aldolase 2">
    <location>
        <begin position="1"/>
        <end position="347"/>
    </location>
</feature>
<feature type="domain" description="Pyruvate carboxyltransferase" evidence="1">
    <location>
        <begin position="7"/>
        <end position="259"/>
    </location>
</feature>
<feature type="active site" description="Proton acceptor" evidence="1">
    <location>
        <position position="19"/>
    </location>
</feature>
<feature type="binding site" evidence="1">
    <location>
        <begin position="15"/>
        <end position="16"/>
    </location>
    <ligand>
        <name>substrate</name>
    </ligand>
</feature>
<feature type="binding site" evidence="1">
    <location>
        <position position="16"/>
    </location>
    <ligand>
        <name>Mn(2+)</name>
        <dbReference type="ChEBI" id="CHEBI:29035"/>
    </ligand>
</feature>
<feature type="binding site" evidence="1">
    <location>
        <position position="169"/>
    </location>
    <ligand>
        <name>substrate</name>
    </ligand>
</feature>
<feature type="binding site" evidence="1">
    <location>
        <position position="198"/>
    </location>
    <ligand>
        <name>Mn(2+)</name>
        <dbReference type="ChEBI" id="CHEBI:29035"/>
    </ligand>
</feature>
<feature type="binding site" evidence="1">
    <location>
        <position position="198"/>
    </location>
    <ligand>
        <name>substrate</name>
    </ligand>
</feature>
<feature type="binding site" evidence="1">
    <location>
        <position position="200"/>
    </location>
    <ligand>
        <name>Mn(2+)</name>
        <dbReference type="ChEBI" id="CHEBI:29035"/>
    </ligand>
</feature>
<feature type="binding site" evidence="1">
    <location>
        <position position="289"/>
    </location>
    <ligand>
        <name>substrate</name>
    </ligand>
</feature>
<feature type="site" description="Transition state stabilizer" evidence="1">
    <location>
        <position position="15"/>
    </location>
</feature>
<protein>
    <recommendedName>
        <fullName evidence="1">4-hydroxy-2-oxovalerate aldolase 2</fullName>
        <shortName evidence="1">HOA 2</shortName>
        <ecNumber evidence="1">4.1.3.39</ecNumber>
    </recommendedName>
    <alternativeName>
        <fullName evidence="1">4-hydroxy-2-keto-pentanoic acid aldolase 2</fullName>
    </alternativeName>
    <alternativeName>
        <fullName evidence="1">4-hydroxy-2-oxopentanoate aldolase 2</fullName>
    </alternativeName>
</protein>
<organism>
    <name type="scientific">Mycobacterium ulcerans (strain Agy99)</name>
    <dbReference type="NCBI Taxonomy" id="362242"/>
    <lineage>
        <taxon>Bacteria</taxon>
        <taxon>Bacillati</taxon>
        <taxon>Actinomycetota</taxon>
        <taxon>Actinomycetes</taxon>
        <taxon>Mycobacteriales</taxon>
        <taxon>Mycobacteriaceae</taxon>
        <taxon>Mycobacterium</taxon>
        <taxon>Mycobacterium ulcerans group</taxon>
    </lineage>
</organism>
<name>HOA2_MYCUA</name>
<accession>A0PUX2</accession>
<comment type="catalytic activity">
    <reaction evidence="1">
        <text>(S)-4-hydroxy-2-oxopentanoate = acetaldehyde + pyruvate</text>
        <dbReference type="Rhea" id="RHEA:22624"/>
        <dbReference type="ChEBI" id="CHEBI:15343"/>
        <dbReference type="ChEBI" id="CHEBI:15361"/>
        <dbReference type="ChEBI" id="CHEBI:73143"/>
        <dbReference type="EC" id="4.1.3.39"/>
    </reaction>
</comment>
<comment type="similarity">
    <text evidence="1">Belongs to the 4-hydroxy-2-oxovalerate aldolase family.</text>
</comment>
<dbReference type="EC" id="4.1.3.39" evidence="1"/>
<dbReference type="EMBL" id="CP000325">
    <property type="protein sequence ID" value="ABL06141.1"/>
    <property type="molecule type" value="Genomic_DNA"/>
</dbReference>
<dbReference type="RefSeq" id="WP_011741745.1">
    <property type="nucleotide sequence ID" value="NC_008611.1"/>
</dbReference>
<dbReference type="SMR" id="A0PUX2"/>
<dbReference type="KEGG" id="mul:MUL_4095"/>
<dbReference type="eggNOG" id="COG0119">
    <property type="taxonomic scope" value="Bacteria"/>
</dbReference>
<dbReference type="HOGENOM" id="CLU_049173_0_0_11"/>
<dbReference type="Proteomes" id="UP000000765">
    <property type="component" value="Chromosome"/>
</dbReference>
<dbReference type="GO" id="GO:0003852">
    <property type="term" value="F:2-isopropylmalate synthase activity"/>
    <property type="evidence" value="ECO:0007669"/>
    <property type="project" value="TreeGrafter"/>
</dbReference>
<dbReference type="GO" id="GO:0008701">
    <property type="term" value="F:4-hydroxy-2-oxovalerate aldolase activity"/>
    <property type="evidence" value="ECO:0007669"/>
    <property type="project" value="UniProtKB-UniRule"/>
</dbReference>
<dbReference type="GO" id="GO:0030145">
    <property type="term" value="F:manganese ion binding"/>
    <property type="evidence" value="ECO:0007669"/>
    <property type="project" value="UniProtKB-UniRule"/>
</dbReference>
<dbReference type="GO" id="GO:0009056">
    <property type="term" value="P:catabolic process"/>
    <property type="evidence" value="ECO:0007669"/>
    <property type="project" value="UniProtKB-KW"/>
</dbReference>
<dbReference type="GO" id="GO:0009098">
    <property type="term" value="P:L-leucine biosynthetic process"/>
    <property type="evidence" value="ECO:0007669"/>
    <property type="project" value="TreeGrafter"/>
</dbReference>
<dbReference type="CDD" id="cd07943">
    <property type="entry name" value="DRE_TIM_HOA"/>
    <property type="match status" value="1"/>
</dbReference>
<dbReference type="FunFam" id="1.10.8.60:FF:000042">
    <property type="entry name" value="4-hydroxy-2-oxovalerate aldolase"/>
    <property type="match status" value="1"/>
</dbReference>
<dbReference type="FunFam" id="3.20.20.70:FF:000072">
    <property type="entry name" value="4-hydroxy-2-oxovalerate aldolase"/>
    <property type="match status" value="1"/>
</dbReference>
<dbReference type="Gene3D" id="1.10.8.60">
    <property type="match status" value="1"/>
</dbReference>
<dbReference type="Gene3D" id="3.20.20.70">
    <property type="entry name" value="Aldolase class I"/>
    <property type="match status" value="1"/>
</dbReference>
<dbReference type="HAMAP" id="MF_01656">
    <property type="entry name" value="HOA"/>
    <property type="match status" value="1"/>
</dbReference>
<dbReference type="InterPro" id="IPR050073">
    <property type="entry name" value="2-IPM_HCS-like"/>
</dbReference>
<dbReference type="InterPro" id="IPR017629">
    <property type="entry name" value="4OH_2_O-val_aldolase"/>
</dbReference>
<dbReference type="InterPro" id="IPR013785">
    <property type="entry name" value="Aldolase_TIM"/>
</dbReference>
<dbReference type="InterPro" id="IPR012425">
    <property type="entry name" value="DmpG_comm"/>
</dbReference>
<dbReference type="InterPro" id="IPR035685">
    <property type="entry name" value="DRE_TIM_HOA"/>
</dbReference>
<dbReference type="InterPro" id="IPR000891">
    <property type="entry name" value="PYR_CT"/>
</dbReference>
<dbReference type="NCBIfam" id="TIGR03217">
    <property type="entry name" value="4OH_2_O_val_ald"/>
    <property type="match status" value="1"/>
</dbReference>
<dbReference type="NCBIfam" id="NF006049">
    <property type="entry name" value="PRK08195.1"/>
    <property type="match status" value="1"/>
</dbReference>
<dbReference type="PANTHER" id="PTHR10277:SF9">
    <property type="entry name" value="2-ISOPROPYLMALATE SYNTHASE 1, CHLOROPLASTIC-RELATED"/>
    <property type="match status" value="1"/>
</dbReference>
<dbReference type="PANTHER" id="PTHR10277">
    <property type="entry name" value="HOMOCITRATE SYNTHASE-RELATED"/>
    <property type="match status" value="1"/>
</dbReference>
<dbReference type="Pfam" id="PF07836">
    <property type="entry name" value="DmpG_comm"/>
    <property type="match status" value="1"/>
</dbReference>
<dbReference type="Pfam" id="PF00682">
    <property type="entry name" value="HMGL-like"/>
    <property type="match status" value="1"/>
</dbReference>
<dbReference type="SUPFAM" id="SSF51569">
    <property type="entry name" value="Aldolase"/>
    <property type="match status" value="1"/>
</dbReference>
<dbReference type="SUPFAM" id="SSF89000">
    <property type="entry name" value="post-HMGL domain-like"/>
    <property type="match status" value="1"/>
</dbReference>
<dbReference type="PROSITE" id="PS50991">
    <property type="entry name" value="PYR_CT"/>
    <property type="match status" value="1"/>
</dbReference>
<keyword id="KW-0058">Aromatic hydrocarbons catabolism</keyword>
<keyword id="KW-0456">Lyase</keyword>
<keyword id="KW-0464">Manganese</keyword>
<keyword id="KW-0479">Metal-binding</keyword>